<keyword id="KW-0227">DNA damage</keyword>
<keyword id="KW-0234">DNA repair</keyword>
<feature type="chain" id="PRO_1000192183" description="DNA mismatch repair protein MutL">
    <location>
        <begin position="1"/>
        <end position="649"/>
    </location>
</feature>
<sequence>MSHIIELPEMLANQIAAGEVIERPASVVKELVENAIDAGSSQIIIEIEEAGLKKIQITDNGHGIAHDEVELALRRHATSKIKNQADLFRIRTLGFRGEALPSIASVSVLTLLTAVDGASHGTKLVARGGEVEEVIPATSPVGTKVCVEDLFFNTPARLKYMKSQQAELSHIIDIVNRLGLAHPEISFSLISDGKEMTRTAGTGQLRQAIAGIYGLVSAKKMIEIENSDLDFEISGFVSLPELTRANRNYISLFINGRYIKNFLLNRAILDGFGSKLMVGRFPLAVIHIHIDPYLADVNVHPTKQEVRISKEKELMALVSEAIANSLKEQTLIPDALENLAKSTVRNREKVEQTILPLKENTLYYEKTEPSRPSQTEVADYQVELTDEGQDLTLFAKETLDRLTKPAKLHFAERKPANYDQLDHPELDLASIDKAYDKLEREEASSFPELEFFGQMHGTYLFAQGRDGLYIIDQHAAQERVKYEEYRESIGNVDQSQQQLLVPYIFEFPADDALCLKERMPLLEEVGVFLAEYGENQFILREHPIWMAEEEIESGIYEMCDMLLLTKEVSIKKYRAELAIMMSCKRSIKANHRIDDHSARQLLYQLSQCDNPYNCPHGRPVLVHFTKSDMEKMFRRIQENHTSLRELGKY</sequence>
<reference key="1">
    <citation type="journal article" date="2010" name="Genome Biol.">
        <title>Structure and dynamics of the pan-genome of Streptococcus pneumoniae and closely related species.</title>
        <authorList>
            <person name="Donati C."/>
            <person name="Hiller N.L."/>
            <person name="Tettelin H."/>
            <person name="Muzzi A."/>
            <person name="Croucher N.J."/>
            <person name="Angiuoli S.V."/>
            <person name="Oggioni M."/>
            <person name="Dunning Hotopp J.C."/>
            <person name="Hu F.Z."/>
            <person name="Riley D.R."/>
            <person name="Covacci A."/>
            <person name="Mitchell T.J."/>
            <person name="Bentley S.D."/>
            <person name="Kilian M."/>
            <person name="Ehrlich G.D."/>
            <person name="Rappuoli R."/>
            <person name="Moxon E.R."/>
            <person name="Masignani V."/>
        </authorList>
    </citation>
    <scope>NUCLEOTIDE SEQUENCE [LARGE SCALE GENOMIC DNA]</scope>
    <source>
        <strain>JJA</strain>
    </source>
</reference>
<organism>
    <name type="scientific">Streptococcus pneumoniae (strain JJA)</name>
    <dbReference type="NCBI Taxonomy" id="488222"/>
    <lineage>
        <taxon>Bacteria</taxon>
        <taxon>Bacillati</taxon>
        <taxon>Bacillota</taxon>
        <taxon>Bacilli</taxon>
        <taxon>Lactobacillales</taxon>
        <taxon>Streptococcaceae</taxon>
        <taxon>Streptococcus</taxon>
    </lineage>
</organism>
<protein>
    <recommendedName>
        <fullName evidence="1">DNA mismatch repair protein MutL</fullName>
    </recommendedName>
</protein>
<comment type="function">
    <text evidence="1">This protein is involved in the repair of mismatches in DNA. It is required for dam-dependent methyl-directed DNA mismatch repair. May act as a 'molecular matchmaker', a protein that promotes the formation of a stable complex between two or more DNA-binding proteins in an ATP-dependent manner without itself being part of a final effector complex.</text>
</comment>
<comment type="similarity">
    <text evidence="1">Belongs to the DNA mismatch repair MutL/HexB family.</text>
</comment>
<name>MUTL_STRZJ</name>
<gene>
    <name evidence="1" type="primary">mutL</name>
    <name type="ordered locus">SPJ_0191</name>
</gene>
<proteinExistence type="inferred from homology"/>
<evidence type="ECO:0000255" key="1">
    <source>
        <dbReference type="HAMAP-Rule" id="MF_00149"/>
    </source>
</evidence>
<accession>C1CBX8</accession>
<dbReference type="EMBL" id="CP000919">
    <property type="protein sequence ID" value="ACO18676.1"/>
    <property type="molecule type" value="Genomic_DNA"/>
</dbReference>
<dbReference type="RefSeq" id="WP_000018156.1">
    <property type="nucleotide sequence ID" value="NC_012466.1"/>
</dbReference>
<dbReference type="SMR" id="C1CBX8"/>
<dbReference type="KEGG" id="sjj:SPJ_0191"/>
<dbReference type="HOGENOM" id="CLU_004131_4_1_9"/>
<dbReference type="Proteomes" id="UP000002206">
    <property type="component" value="Chromosome"/>
</dbReference>
<dbReference type="GO" id="GO:0032300">
    <property type="term" value="C:mismatch repair complex"/>
    <property type="evidence" value="ECO:0007669"/>
    <property type="project" value="InterPro"/>
</dbReference>
<dbReference type="GO" id="GO:0005524">
    <property type="term" value="F:ATP binding"/>
    <property type="evidence" value="ECO:0007669"/>
    <property type="project" value="InterPro"/>
</dbReference>
<dbReference type="GO" id="GO:0016887">
    <property type="term" value="F:ATP hydrolysis activity"/>
    <property type="evidence" value="ECO:0007669"/>
    <property type="project" value="InterPro"/>
</dbReference>
<dbReference type="GO" id="GO:0140664">
    <property type="term" value="F:ATP-dependent DNA damage sensor activity"/>
    <property type="evidence" value="ECO:0007669"/>
    <property type="project" value="InterPro"/>
</dbReference>
<dbReference type="GO" id="GO:0030983">
    <property type="term" value="F:mismatched DNA binding"/>
    <property type="evidence" value="ECO:0007669"/>
    <property type="project" value="InterPro"/>
</dbReference>
<dbReference type="GO" id="GO:0006298">
    <property type="term" value="P:mismatch repair"/>
    <property type="evidence" value="ECO:0007669"/>
    <property type="project" value="UniProtKB-UniRule"/>
</dbReference>
<dbReference type="CDD" id="cd16926">
    <property type="entry name" value="HATPase_MutL-MLH-PMS-like"/>
    <property type="match status" value="1"/>
</dbReference>
<dbReference type="CDD" id="cd00782">
    <property type="entry name" value="MutL_Trans"/>
    <property type="match status" value="1"/>
</dbReference>
<dbReference type="FunFam" id="3.30.1370.100:FF:000004">
    <property type="entry name" value="DNA mismatch repair endonuclease MutL"/>
    <property type="match status" value="1"/>
</dbReference>
<dbReference type="FunFam" id="3.30.230.10:FF:000036">
    <property type="entry name" value="DNA mismatch repair endonuclease MutL"/>
    <property type="match status" value="1"/>
</dbReference>
<dbReference type="FunFam" id="3.30.565.10:FF:000003">
    <property type="entry name" value="DNA mismatch repair endonuclease MutL"/>
    <property type="match status" value="1"/>
</dbReference>
<dbReference type="Gene3D" id="3.30.230.10">
    <property type="match status" value="1"/>
</dbReference>
<dbReference type="Gene3D" id="3.30.565.10">
    <property type="entry name" value="Histidine kinase-like ATPase, C-terminal domain"/>
    <property type="match status" value="1"/>
</dbReference>
<dbReference type="Gene3D" id="3.30.1540.20">
    <property type="entry name" value="MutL, C-terminal domain, dimerisation subdomain"/>
    <property type="match status" value="1"/>
</dbReference>
<dbReference type="Gene3D" id="3.30.1370.100">
    <property type="entry name" value="MutL, C-terminal domain, regulatory subdomain"/>
    <property type="match status" value="1"/>
</dbReference>
<dbReference type="HAMAP" id="MF_00149">
    <property type="entry name" value="DNA_mis_repair"/>
    <property type="match status" value="1"/>
</dbReference>
<dbReference type="InterPro" id="IPR014762">
    <property type="entry name" value="DNA_mismatch_repair_CS"/>
</dbReference>
<dbReference type="InterPro" id="IPR020667">
    <property type="entry name" value="DNA_mismatch_repair_MutL"/>
</dbReference>
<dbReference type="InterPro" id="IPR013507">
    <property type="entry name" value="DNA_mismatch_S5_2-like"/>
</dbReference>
<dbReference type="InterPro" id="IPR036890">
    <property type="entry name" value="HATPase_C_sf"/>
</dbReference>
<dbReference type="InterPro" id="IPR002099">
    <property type="entry name" value="MutL/Mlh/PMS"/>
</dbReference>
<dbReference type="InterPro" id="IPR038973">
    <property type="entry name" value="MutL/Mlh/Pms-like"/>
</dbReference>
<dbReference type="InterPro" id="IPR014790">
    <property type="entry name" value="MutL_C"/>
</dbReference>
<dbReference type="InterPro" id="IPR042120">
    <property type="entry name" value="MutL_C_dimsub"/>
</dbReference>
<dbReference type="InterPro" id="IPR042121">
    <property type="entry name" value="MutL_C_regsub"/>
</dbReference>
<dbReference type="InterPro" id="IPR037198">
    <property type="entry name" value="MutL_C_sf"/>
</dbReference>
<dbReference type="InterPro" id="IPR020568">
    <property type="entry name" value="Ribosomal_Su5_D2-typ_SF"/>
</dbReference>
<dbReference type="InterPro" id="IPR014721">
    <property type="entry name" value="Ribsml_uS5_D2-typ_fold_subgr"/>
</dbReference>
<dbReference type="NCBIfam" id="TIGR00585">
    <property type="entry name" value="mutl"/>
    <property type="match status" value="1"/>
</dbReference>
<dbReference type="NCBIfam" id="NF000950">
    <property type="entry name" value="PRK00095.1-3"/>
    <property type="match status" value="1"/>
</dbReference>
<dbReference type="PANTHER" id="PTHR10073">
    <property type="entry name" value="DNA MISMATCH REPAIR PROTEIN MLH, PMS, MUTL"/>
    <property type="match status" value="1"/>
</dbReference>
<dbReference type="PANTHER" id="PTHR10073:SF12">
    <property type="entry name" value="DNA MISMATCH REPAIR PROTEIN MLH1"/>
    <property type="match status" value="1"/>
</dbReference>
<dbReference type="Pfam" id="PF01119">
    <property type="entry name" value="DNA_mis_repair"/>
    <property type="match status" value="1"/>
</dbReference>
<dbReference type="Pfam" id="PF13589">
    <property type="entry name" value="HATPase_c_3"/>
    <property type="match status" value="1"/>
</dbReference>
<dbReference type="Pfam" id="PF08676">
    <property type="entry name" value="MutL_C"/>
    <property type="match status" value="1"/>
</dbReference>
<dbReference type="SMART" id="SM01340">
    <property type="entry name" value="DNA_mis_repair"/>
    <property type="match status" value="1"/>
</dbReference>
<dbReference type="SMART" id="SM00853">
    <property type="entry name" value="MutL_C"/>
    <property type="match status" value="1"/>
</dbReference>
<dbReference type="SUPFAM" id="SSF55874">
    <property type="entry name" value="ATPase domain of HSP90 chaperone/DNA topoisomerase II/histidine kinase"/>
    <property type="match status" value="1"/>
</dbReference>
<dbReference type="SUPFAM" id="SSF118116">
    <property type="entry name" value="DNA mismatch repair protein MutL"/>
    <property type="match status" value="1"/>
</dbReference>
<dbReference type="SUPFAM" id="SSF54211">
    <property type="entry name" value="Ribosomal protein S5 domain 2-like"/>
    <property type="match status" value="1"/>
</dbReference>
<dbReference type="PROSITE" id="PS00058">
    <property type="entry name" value="DNA_MISMATCH_REPAIR_1"/>
    <property type="match status" value="1"/>
</dbReference>